<protein>
    <recommendedName>
        <fullName evidence="1">Aminomethyltransferase</fullName>
        <ecNumber evidence="1">2.1.2.10</ecNumber>
    </recommendedName>
    <alternativeName>
        <fullName evidence="1">Glycine cleavage system T protein</fullName>
    </alternativeName>
</protein>
<gene>
    <name evidence="1" type="primary">gcvT</name>
    <name type="ordered locus">YpsIP31758_0863</name>
</gene>
<accession>A7FF19</accession>
<comment type="function">
    <text evidence="1">The glycine cleavage system catalyzes the degradation of glycine.</text>
</comment>
<comment type="catalytic activity">
    <reaction evidence="1">
        <text>N(6)-[(R)-S(8)-aminomethyldihydrolipoyl]-L-lysyl-[protein] + (6S)-5,6,7,8-tetrahydrofolate = N(6)-[(R)-dihydrolipoyl]-L-lysyl-[protein] + (6R)-5,10-methylene-5,6,7,8-tetrahydrofolate + NH4(+)</text>
        <dbReference type="Rhea" id="RHEA:16945"/>
        <dbReference type="Rhea" id="RHEA-COMP:10475"/>
        <dbReference type="Rhea" id="RHEA-COMP:10492"/>
        <dbReference type="ChEBI" id="CHEBI:15636"/>
        <dbReference type="ChEBI" id="CHEBI:28938"/>
        <dbReference type="ChEBI" id="CHEBI:57453"/>
        <dbReference type="ChEBI" id="CHEBI:83100"/>
        <dbReference type="ChEBI" id="CHEBI:83143"/>
        <dbReference type="EC" id="2.1.2.10"/>
    </reaction>
</comment>
<comment type="subunit">
    <text evidence="1">The glycine cleavage system is composed of four proteins: P, T, L and H.</text>
</comment>
<comment type="similarity">
    <text evidence="1">Belongs to the GcvT family.</text>
</comment>
<keyword id="KW-0032">Aminotransferase</keyword>
<keyword id="KW-0808">Transferase</keyword>
<dbReference type="EC" id="2.1.2.10" evidence="1"/>
<dbReference type="EMBL" id="CP000720">
    <property type="protein sequence ID" value="ABS49598.1"/>
    <property type="molecule type" value="Genomic_DNA"/>
</dbReference>
<dbReference type="RefSeq" id="WP_011192962.1">
    <property type="nucleotide sequence ID" value="NC_009708.1"/>
</dbReference>
<dbReference type="SMR" id="A7FF19"/>
<dbReference type="KEGG" id="ypi:YpsIP31758_0863"/>
<dbReference type="HOGENOM" id="CLU_007884_10_2_6"/>
<dbReference type="Proteomes" id="UP000002412">
    <property type="component" value="Chromosome"/>
</dbReference>
<dbReference type="GO" id="GO:0005829">
    <property type="term" value="C:cytosol"/>
    <property type="evidence" value="ECO:0007669"/>
    <property type="project" value="TreeGrafter"/>
</dbReference>
<dbReference type="GO" id="GO:0005960">
    <property type="term" value="C:glycine cleavage complex"/>
    <property type="evidence" value="ECO:0007669"/>
    <property type="project" value="InterPro"/>
</dbReference>
<dbReference type="GO" id="GO:0004047">
    <property type="term" value="F:aminomethyltransferase activity"/>
    <property type="evidence" value="ECO:0007669"/>
    <property type="project" value="UniProtKB-UniRule"/>
</dbReference>
<dbReference type="GO" id="GO:0008483">
    <property type="term" value="F:transaminase activity"/>
    <property type="evidence" value="ECO:0007669"/>
    <property type="project" value="UniProtKB-KW"/>
</dbReference>
<dbReference type="GO" id="GO:0019464">
    <property type="term" value="P:glycine decarboxylation via glycine cleavage system"/>
    <property type="evidence" value="ECO:0007669"/>
    <property type="project" value="UniProtKB-UniRule"/>
</dbReference>
<dbReference type="FunFam" id="2.40.30.110:FF:000001">
    <property type="entry name" value="Aminomethyltransferase"/>
    <property type="match status" value="1"/>
</dbReference>
<dbReference type="FunFam" id="3.30.70.1400:FF:000001">
    <property type="entry name" value="Aminomethyltransferase"/>
    <property type="match status" value="1"/>
</dbReference>
<dbReference type="FunFam" id="4.10.1250.10:FF:000001">
    <property type="entry name" value="Aminomethyltransferase"/>
    <property type="match status" value="1"/>
</dbReference>
<dbReference type="Gene3D" id="2.40.30.110">
    <property type="entry name" value="Aminomethyltransferase beta-barrel domains"/>
    <property type="match status" value="1"/>
</dbReference>
<dbReference type="Gene3D" id="3.30.70.1400">
    <property type="entry name" value="Aminomethyltransferase beta-barrel domains"/>
    <property type="match status" value="1"/>
</dbReference>
<dbReference type="Gene3D" id="4.10.1250.10">
    <property type="entry name" value="Aminomethyltransferase fragment"/>
    <property type="match status" value="1"/>
</dbReference>
<dbReference type="Gene3D" id="3.30.1360.120">
    <property type="entry name" value="Probable tRNA modification gtpase trme, domain 1"/>
    <property type="match status" value="1"/>
</dbReference>
<dbReference type="HAMAP" id="MF_00259">
    <property type="entry name" value="GcvT"/>
    <property type="match status" value="1"/>
</dbReference>
<dbReference type="InterPro" id="IPR006223">
    <property type="entry name" value="GCS_T"/>
</dbReference>
<dbReference type="InterPro" id="IPR022903">
    <property type="entry name" value="GCS_T_bac"/>
</dbReference>
<dbReference type="InterPro" id="IPR013977">
    <property type="entry name" value="GCST_C"/>
</dbReference>
<dbReference type="InterPro" id="IPR006222">
    <property type="entry name" value="GCV_T_N"/>
</dbReference>
<dbReference type="InterPro" id="IPR028896">
    <property type="entry name" value="GcvT/YgfZ/DmdA"/>
</dbReference>
<dbReference type="InterPro" id="IPR029043">
    <property type="entry name" value="GcvT/YgfZ_C"/>
</dbReference>
<dbReference type="InterPro" id="IPR027266">
    <property type="entry name" value="TrmE/GcvT_dom1"/>
</dbReference>
<dbReference type="NCBIfam" id="TIGR00528">
    <property type="entry name" value="gcvT"/>
    <property type="match status" value="1"/>
</dbReference>
<dbReference type="NCBIfam" id="NF001567">
    <property type="entry name" value="PRK00389.1"/>
    <property type="match status" value="1"/>
</dbReference>
<dbReference type="PANTHER" id="PTHR43757">
    <property type="entry name" value="AMINOMETHYLTRANSFERASE"/>
    <property type="match status" value="1"/>
</dbReference>
<dbReference type="PANTHER" id="PTHR43757:SF2">
    <property type="entry name" value="AMINOMETHYLTRANSFERASE, MITOCHONDRIAL"/>
    <property type="match status" value="1"/>
</dbReference>
<dbReference type="Pfam" id="PF01571">
    <property type="entry name" value="GCV_T"/>
    <property type="match status" value="1"/>
</dbReference>
<dbReference type="Pfam" id="PF08669">
    <property type="entry name" value="GCV_T_C"/>
    <property type="match status" value="1"/>
</dbReference>
<dbReference type="PIRSF" id="PIRSF006487">
    <property type="entry name" value="GcvT"/>
    <property type="match status" value="1"/>
</dbReference>
<dbReference type="SUPFAM" id="SSF101790">
    <property type="entry name" value="Aminomethyltransferase beta-barrel domain"/>
    <property type="match status" value="1"/>
</dbReference>
<dbReference type="SUPFAM" id="SSF103025">
    <property type="entry name" value="Folate-binding domain"/>
    <property type="match status" value="1"/>
</dbReference>
<name>GCST_YERP3</name>
<evidence type="ECO:0000255" key="1">
    <source>
        <dbReference type="HAMAP-Rule" id="MF_00259"/>
    </source>
</evidence>
<organism>
    <name type="scientific">Yersinia pseudotuberculosis serotype O:1b (strain IP 31758)</name>
    <dbReference type="NCBI Taxonomy" id="349747"/>
    <lineage>
        <taxon>Bacteria</taxon>
        <taxon>Pseudomonadati</taxon>
        <taxon>Pseudomonadota</taxon>
        <taxon>Gammaproteobacteria</taxon>
        <taxon>Enterobacterales</taxon>
        <taxon>Yersiniaceae</taxon>
        <taxon>Yersinia</taxon>
    </lineage>
</organism>
<reference key="1">
    <citation type="journal article" date="2007" name="PLoS Genet.">
        <title>The complete genome sequence of Yersinia pseudotuberculosis IP31758, the causative agent of Far East scarlet-like fever.</title>
        <authorList>
            <person name="Eppinger M."/>
            <person name="Rosovitz M.J."/>
            <person name="Fricke W.F."/>
            <person name="Rasko D.A."/>
            <person name="Kokorina G."/>
            <person name="Fayolle C."/>
            <person name="Lindler L.E."/>
            <person name="Carniel E."/>
            <person name="Ravel J."/>
        </authorList>
    </citation>
    <scope>NUCLEOTIDE SEQUENCE [LARGE SCALE GENOMIC DNA]</scope>
    <source>
        <strain>IP 31758</strain>
    </source>
</reference>
<proteinExistence type="inferred from homology"/>
<feature type="chain" id="PRO_1000059091" description="Aminomethyltransferase">
    <location>
        <begin position="1"/>
        <end position="365"/>
    </location>
</feature>
<sequence length="365" mass="40288">MAKQTPLYDQHVACGARMVDFHGWMMPLHYGSQIDEHHLVRQDAGMFDVSHMTIVDLHGNRTREFLRYLLANDVAKLTQPGKALYTGMLNESGGVIDDLIVYFLSEDYFRLVVNSATRDKDLAWISQHAEPYQVEVTVRDDLALIAVQGPQAQQKVATLLTTEQQQAIAGMKPFFGIQTGDLFIATTGYTGEAGYEIALPKQQVVAFWQQLLAAGVKPAGLGARDTLRLEAGMNLYGQEMDEKTSPLAANMGWTVAWQPEDRQFIGRAALERQRMKGTEQLVGLIMTEKGVLRNELPVYFFDAAGNQHVGVITSGSFSPTLGFSIALARVPAGIGEHAVVQIRNREMPVRVTKPGFVRAGKAIVL</sequence>